<proteinExistence type="inferred from homology"/>
<organism>
    <name type="scientific">Rickettsia canadensis (strain McKiel)</name>
    <dbReference type="NCBI Taxonomy" id="293613"/>
    <lineage>
        <taxon>Bacteria</taxon>
        <taxon>Pseudomonadati</taxon>
        <taxon>Pseudomonadota</taxon>
        <taxon>Alphaproteobacteria</taxon>
        <taxon>Rickettsiales</taxon>
        <taxon>Rickettsiaceae</taxon>
        <taxon>Rickettsieae</taxon>
        <taxon>Rickettsia</taxon>
        <taxon>belli group</taxon>
    </lineage>
</organism>
<feature type="chain" id="PRO_1000047985" description="Protein RecA">
    <location>
        <begin position="1"/>
        <end position="343"/>
    </location>
</feature>
<feature type="binding site" evidence="1">
    <location>
        <begin position="66"/>
        <end position="73"/>
    </location>
    <ligand>
        <name>ATP</name>
        <dbReference type="ChEBI" id="CHEBI:30616"/>
    </ligand>
</feature>
<evidence type="ECO:0000255" key="1">
    <source>
        <dbReference type="HAMAP-Rule" id="MF_00268"/>
    </source>
</evidence>
<reference key="1">
    <citation type="submission" date="2007-09" db="EMBL/GenBank/DDBJ databases">
        <title>Complete genome sequence of Rickettsia canadensis.</title>
        <authorList>
            <person name="Madan A."/>
            <person name="Fahey J."/>
            <person name="Helton E."/>
            <person name="Ketteman M."/>
            <person name="Madan A."/>
            <person name="Rodrigues S."/>
            <person name="Sanchez A."/>
            <person name="Whiting M."/>
            <person name="Dasch G."/>
            <person name="Eremeeva M."/>
        </authorList>
    </citation>
    <scope>NUCLEOTIDE SEQUENCE [LARGE SCALE GENOMIC DNA]</scope>
    <source>
        <strain>McKiel</strain>
    </source>
</reference>
<dbReference type="EMBL" id="CP000409">
    <property type="protein sequence ID" value="ABV73894.1"/>
    <property type="molecule type" value="Genomic_DNA"/>
</dbReference>
<dbReference type="RefSeq" id="WP_012149089.1">
    <property type="nucleotide sequence ID" value="NC_009879.1"/>
</dbReference>
<dbReference type="SMR" id="A8EZW1"/>
<dbReference type="STRING" id="293613.A1E_04865"/>
<dbReference type="KEGG" id="rcm:A1E_04865"/>
<dbReference type="eggNOG" id="COG0468">
    <property type="taxonomic scope" value="Bacteria"/>
</dbReference>
<dbReference type="HOGENOM" id="CLU_040469_3_2_5"/>
<dbReference type="Proteomes" id="UP000007056">
    <property type="component" value="Chromosome"/>
</dbReference>
<dbReference type="GO" id="GO:0005829">
    <property type="term" value="C:cytosol"/>
    <property type="evidence" value="ECO:0007669"/>
    <property type="project" value="TreeGrafter"/>
</dbReference>
<dbReference type="GO" id="GO:0005524">
    <property type="term" value="F:ATP binding"/>
    <property type="evidence" value="ECO:0007669"/>
    <property type="project" value="UniProtKB-UniRule"/>
</dbReference>
<dbReference type="GO" id="GO:0016887">
    <property type="term" value="F:ATP hydrolysis activity"/>
    <property type="evidence" value="ECO:0007669"/>
    <property type="project" value="InterPro"/>
</dbReference>
<dbReference type="GO" id="GO:0140664">
    <property type="term" value="F:ATP-dependent DNA damage sensor activity"/>
    <property type="evidence" value="ECO:0007669"/>
    <property type="project" value="InterPro"/>
</dbReference>
<dbReference type="GO" id="GO:0003684">
    <property type="term" value="F:damaged DNA binding"/>
    <property type="evidence" value="ECO:0007669"/>
    <property type="project" value="UniProtKB-UniRule"/>
</dbReference>
<dbReference type="GO" id="GO:0003697">
    <property type="term" value="F:single-stranded DNA binding"/>
    <property type="evidence" value="ECO:0007669"/>
    <property type="project" value="UniProtKB-UniRule"/>
</dbReference>
<dbReference type="GO" id="GO:0006310">
    <property type="term" value="P:DNA recombination"/>
    <property type="evidence" value="ECO:0007669"/>
    <property type="project" value="UniProtKB-UniRule"/>
</dbReference>
<dbReference type="GO" id="GO:0006281">
    <property type="term" value="P:DNA repair"/>
    <property type="evidence" value="ECO:0007669"/>
    <property type="project" value="UniProtKB-UniRule"/>
</dbReference>
<dbReference type="GO" id="GO:0009432">
    <property type="term" value="P:SOS response"/>
    <property type="evidence" value="ECO:0007669"/>
    <property type="project" value="UniProtKB-UniRule"/>
</dbReference>
<dbReference type="CDD" id="cd00983">
    <property type="entry name" value="RecA"/>
    <property type="match status" value="1"/>
</dbReference>
<dbReference type="FunFam" id="3.40.50.300:FF:000087">
    <property type="entry name" value="Recombinase RecA"/>
    <property type="match status" value="1"/>
</dbReference>
<dbReference type="Gene3D" id="3.40.50.300">
    <property type="entry name" value="P-loop containing nucleotide triphosphate hydrolases"/>
    <property type="match status" value="1"/>
</dbReference>
<dbReference type="HAMAP" id="MF_00268">
    <property type="entry name" value="RecA"/>
    <property type="match status" value="1"/>
</dbReference>
<dbReference type="InterPro" id="IPR003593">
    <property type="entry name" value="AAA+_ATPase"/>
</dbReference>
<dbReference type="InterPro" id="IPR013765">
    <property type="entry name" value="DNA_recomb/repair_RecA"/>
</dbReference>
<dbReference type="InterPro" id="IPR020584">
    <property type="entry name" value="DNA_recomb/repair_RecA_CS"/>
</dbReference>
<dbReference type="InterPro" id="IPR027417">
    <property type="entry name" value="P-loop_NTPase"/>
</dbReference>
<dbReference type="InterPro" id="IPR049261">
    <property type="entry name" value="RecA-like_C"/>
</dbReference>
<dbReference type="InterPro" id="IPR049428">
    <property type="entry name" value="RecA-like_N"/>
</dbReference>
<dbReference type="InterPro" id="IPR020588">
    <property type="entry name" value="RecA_ATP-bd"/>
</dbReference>
<dbReference type="InterPro" id="IPR023400">
    <property type="entry name" value="RecA_C_sf"/>
</dbReference>
<dbReference type="InterPro" id="IPR020587">
    <property type="entry name" value="RecA_monomer-monomer_interface"/>
</dbReference>
<dbReference type="NCBIfam" id="TIGR02012">
    <property type="entry name" value="tigrfam_recA"/>
    <property type="match status" value="1"/>
</dbReference>
<dbReference type="PANTHER" id="PTHR45900:SF1">
    <property type="entry name" value="MITOCHONDRIAL DNA REPAIR PROTEIN RECA HOMOLOG-RELATED"/>
    <property type="match status" value="1"/>
</dbReference>
<dbReference type="PANTHER" id="PTHR45900">
    <property type="entry name" value="RECA"/>
    <property type="match status" value="1"/>
</dbReference>
<dbReference type="Pfam" id="PF00154">
    <property type="entry name" value="RecA"/>
    <property type="match status" value="1"/>
</dbReference>
<dbReference type="Pfam" id="PF21096">
    <property type="entry name" value="RecA_C"/>
    <property type="match status" value="1"/>
</dbReference>
<dbReference type="PRINTS" id="PR00142">
    <property type="entry name" value="RECA"/>
</dbReference>
<dbReference type="SMART" id="SM00382">
    <property type="entry name" value="AAA"/>
    <property type="match status" value="1"/>
</dbReference>
<dbReference type="SUPFAM" id="SSF52540">
    <property type="entry name" value="P-loop containing nucleoside triphosphate hydrolases"/>
    <property type="match status" value="1"/>
</dbReference>
<dbReference type="SUPFAM" id="SSF54752">
    <property type="entry name" value="RecA protein, C-terminal domain"/>
    <property type="match status" value="1"/>
</dbReference>
<dbReference type="PROSITE" id="PS00321">
    <property type="entry name" value="RECA_1"/>
    <property type="match status" value="1"/>
</dbReference>
<dbReference type="PROSITE" id="PS50162">
    <property type="entry name" value="RECA_2"/>
    <property type="match status" value="1"/>
</dbReference>
<dbReference type="PROSITE" id="PS50163">
    <property type="entry name" value="RECA_3"/>
    <property type="match status" value="1"/>
</dbReference>
<keyword id="KW-0067">ATP-binding</keyword>
<keyword id="KW-0963">Cytoplasm</keyword>
<keyword id="KW-0227">DNA damage</keyword>
<keyword id="KW-0233">DNA recombination</keyword>
<keyword id="KW-0234">DNA repair</keyword>
<keyword id="KW-0238">DNA-binding</keyword>
<keyword id="KW-0547">Nucleotide-binding</keyword>
<keyword id="KW-0742">SOS response</keyword>
<comment type="function">
    <text evidence="1">Can catalyze the hydrolysis of ATP in the presence of single-stranded DNA, the ATP-dependent uptake of single-stranded DNA by duplex DNA, and the ATP-dependent hybridization of homologous single-stranded DNAs. It interacts with LexA causing its activation and leading to its autocatalytic cleavage.</text>
</comment>
<comment type="subcellular location">
    <subcellularLocation>
        <location evidence="1">Cytoplasm</location>
    </subcellularLocation>
</comment>
<comment type="similarity">
    <text evidence="1">Belongs to the RecA family.</text>
</comment>
<sequence>MSNTDKERAIAAALAQIEKSYGKGSVMKLGQRPNIDIEAVSTGSLGLDMALGIGGVPKGRIIEIFGPESSGKTTLTLHLIAEAQKKGGTCAFIDAEHALDPAYAKKLGVNIDELIISQPDTGEQALEITDTLIRSGGIDMVIIDSVAALVPKSEIEGEMGDAQMASQARLMSQALRKLTASISRTNCIAVFINQIRMKIGVMFGSPETTTGGNALKFYASVRIDIRRIGSIKDKEEVIGSQTKVKVVKNKVSPPFKTADFDIMYGSGISKEGEIIDLGVKLDIVEKSGSWFSYNNVRIGQGRENVKQYLKEHPQIANEIEKIIREKSSKITNMNLDQMEEEND</sequence>
<gene>
    <name evidence="1" type="primary">recA</name>
    <name type="ordered locus">A1E_04865</name>
</gene>
<name>RECA_RICCK</name>
<protein>
    <recommendedName>
        <fullName evidence="1">Protein RecA</fullName>
    </recommendedName>
    <alternativeName>
        <fullName evidence="1">Recombinase A</fullName>
    </alternativeName>
</protein>
<accession>A8EZW1</accession>